<keyword id="KW-0028">Amino-acid biosynthesis</keyword>
<keyword id="KW-0067">ATP-binding</keyword>
<keyword id="KW-0963">Cytoplasm</keyword>
<keyword id="KW-0368">Histidine biosynthesis</keyword>
<keyword id="KW-0378">Hydrolase</keyword>
<keyword id="KW-0547">Nucleotide-binding</keyword>
<keyword id="KW-1185">Reference proteome</keyword>
<name>HIS2_METKA</name>
<protein>
    <recommendedName>
        <fullName>Phosphoribosyl-ATP pyrophosphatase</fullName>
        <shortName>PRA-PH</shortName>
        <ecNumber>3.6.1.31</ecNumber>
    </recommendedName>
</protein>
<organism>
    <name type="scientific">Methanopyrus kandleri (strain AV19 / DSM 6324 / JCM 9639 / NBRC 100938)</name>
    <dbReference type="NCBI Taxonomy" id="190192"/>
    <lineage>
        <taxon>Archaea</taxon>
        <taxon>Methanobacteriati</taxon>
        <taxon>Methanobacteriota</taxon>
        <taxon>Methanomada group</taxon>
        <taxon>Methanopyri</taxon>
        <taxon>Methanopyrales</taxon>
        <taxon>Methanopyraceae</taxon>
        <taxon>Methanopyrus</taxon>
    </lineage>
</organism>
<proteinExistence type="inferred from homology"/>
<gene>
    <name type="primary">hisE</name>
    <name type="synonym">hisI_1</name>
    <name type="ordered locus">MK0500</name>
</gene>
<dbReference type="EC" id="3.6.1.31"/>
<dbReference type="EMBL" id="AE009439">
    <property type="protein sequence ID" value="AAM01715.1"/>
    <property type="molecule type" value="Genomic_DNA"/>
</dbReference>
<dbReference type="RefSeq" id="WP_011018870.1">
    <property type="nucleotide sequence ID" value="NC_003551.1"/>
</dbReference>
<dbReference type="SMR" id="P58835"/>
<dbReference type="FunCoup" id="P58835">
    <property type="interactions" value="69"/>
</dbReference>
<dbReference type="STRING" id="190192.MK0500"/>
<dbReference type="PaxDb" id="190192-MK0500"/>
<dbReference type="EnsemblBacteria" id="AAM01715">
    <property type="protein sequence ID" value="AAM01715"/>
    <property type="gene ID" value="MK0500"/>
</dbReference>
<dbReference type="GeneID" id="1476601"/>
<dbReference type="KEGG" id="mka:MK0500"/>
<dbReference type="PATRIC" id="fig|190192.8.peg.530"/>
<dbReference type="HOGENOM" id="CLU_123337_0_0_2"/>
<dbReference type="InParanoid" id="P58835"/>
<dbReference type="OrthoDB" id="39686at2157"/>
<dbReference type="UniPathway" id="UPA00031">
    <property type="reaction ID" value="UER00007"/>
</dbReference>
<dbReference type="Proteomes" id="UP000001826">
    <property type="component" value="Chromosome"/>
</dbReference>
<dbReference type="GO" id="GO:0005737">
    <property type="term" value="C:cytoplasm"/>
    <property type="evidence" value="ECO:0007669"/>
    <property type="project" value="UniProtKB-SubCell"/>
</dbReference>
<dbReference type="GO" id="GO:0005524">
    <property type="term" value="F:ATP binding"/>
    <property type="evidence" value="ECO:0007669"/>
    <property type="project" value="UniProtKB-KW"/>
</dbReference>
<dbReference type="GO" id="GO:0004636">
    <property type="term" value="F:phosphoribosyl-ATP diphosphatase activity"/>
    <property type="evidence" value="ECO:0007669"/>
    <property type="project" value="UniProtKB-UniRule"/>
</dbReference>
<dbReference type="GO" id="GO:0000105">
    <property type="term" value="P:L-histidine biosynthetic process"/>
    <property type="evidence" value="ECO:0007669"/>
    <property type="project" value="UniProtKB-UniRule"/>
</dbReference>
<dbReference type="CDD" id="cd11534">
    <property type="entry name" value="NTP-PPase_HisIE_like"/>
    <property type="match status" value="1"/>
</dbReference>
<dbReference type="Gene3D" id="1.10.287.1080">
    <property type="entry name" value="MazG-like"/>
    <property type="match status" value="1"/>
</dbReference>
<dbReference type="HAMAP" id="MF_01020">
    <property type="entry name" value="HisE"/>
    <property type="match status" value="1"/>
</dbReference>
<dbReference type="InterPro" id="IPR008179">
    <property type="entry name" value="HisE"/>
</dbReference>
<dbReference type="InterPro" id="IPR021130">
    <property type="entry name" value="PRib-ATP_PPHydrolase-like"/>
</dbReference>
<dbReference type="NCBIfam" id="TIGR03188">
    <property type="entry name" value="histidine_hisI"/>
    <property type="match status" value="1"/>
</dbReference>
<dbReference type="PANTHER" id="PTHR42945">
    <property type="entry name" value="HISTIDINE BIOSYNTHESIS BIFUNCTIONAL PROTEIN"/>
    <property type="match status" value="1"/>
</dbReference>
<dbReference type="PANTHER" id="PTHR42945:SF1">
    <property type="entry name" value="HISTIDINE BIOSYNTHESIS BIFUNCTIONAL PROTEIN HIS7"/>
    <property type="match status" value="1"/>
</dbReference>
<dbReference type="Pfam" id="PF01503">
    <property type="entry name" value="PRA-PH"/>
    <property type="match status" value="1"/>
</dbReference>
<dbReference type="SUPFAM" id="SSF101386">
    <property type="entry name" value="all-alpha NTP pyrophosphatases"/>
    <property type="match status" value="1"/>
</dbReference>
<reference key="1">
    <citation type="journal article" date="2002" name="Proc. Natl. Acad. Sci. U.S.A.">
        <title>The complete genome of hyperthermophile Methanopyrus kandleri AV19 and monophyly of archaeal methanogens.</title>
        <authorList>
            <person name="Slesarev A.I."/>
            <person name="Mezhevaya K.V."/>
            <person name="Makarova K.S."/>
            <person name="Polushin N.N."/>
            <person name="Shcherbinina O.V."/>
            <person name="Shakhova V.V."/>
            <person name="Belova G.I."/>
            <person name="Aravind L."/>
            <person name="Natale D.A."/>
            <person name="Rogozin I.B."/>
            <person name="Tatusov R.L."/>
            <person name="Wolf Y.I."/>
            <person name="Stetter K.O."/>
            <person name="Malykh A.G."/>
            <person name="Koonin E.V."/>
            <person name="Kozyavkin S.A."/>
        </authorList>
    </citation>
    <scope>NUCLEOTIDE SEQUENCE [LARGE SCALE GENOMIC DNA]</scope>
    <source>
        <strain>AV19 / DSM 6324 / JCM 9639 / NBRC 100938</strain>
    </source>
</reference>
<feature type="chain" id="PRO_0000136392" description="Phosphoribosyl-ATP pyrophosphatase">
    <location>
        <begin position="1"/>
        <end position="100"/>
    </location>
</feature>
<accession>P58835</accession>
<comment type="catalytic activity">
    <reaction>
        <text>1-(5-phospho-beta-D-ribosyl)-ATP + H2O = 1-(5-phospho-beta-D-ribosyl)-5'-AMP + diphosphate + H(+)</text>
        <dbReference type="Rhea" id="RHEA:22828"/>
        <dbReference type="ChEBI" id="CHEBI:15377"/>
        <dbReference type="ChEBI" id="CHEBI:15378"/>
        <dbReference type="ChEBI" id="CHEBI:33019"/>
        <dbReference type="ChEBI" id="CHEBI:59457"/>
        <dbReference type="ChEBI" id="CHEBI:73183"/>
        <dbReference type="EC" id="3.6.1.31"/>
    </reaction>
</comment>
<comment type="pathway">
    <text>Amino-acid biosynthesis; L-histidine biosynthesis; L-histidine from 5-phospho-alpha-D-ribose 1-diphosphate: step 2/9.</text>
</comment>
<comment type="subcellular location">
    <subcellularLocation>
        <location evidence="1">Cytoplasm</location>
    </subcellularLocation>
</comment>
<comment type="similarity">
    <text evidence="2">Belongs to the PRA-PH family.</text>
</comment>
<sequence length="100" mass="11457">MGDPEVLLEVYEVIRNRIEERPEGSYVAELTEDDDTKPAINKICEKIIEESGELILAAKDGDREGVVYESTDLIFHVLVLLAYLGIEIGEVFDEFERRRK</sequence>
<evidence type="ECO:0000250" key="1"/>
<evidence type="ECO:0000305" key="2"/>